<name>SDO1L_SCHPO</name>
<sequence length="106" mass="11892">MSSSKANQTRVCYQPEDTTFIIIASNGPDVMRWRKDKTVPLTEIVDSFQVFTTSNNKGNEGQLITASKQELENTFGTSKDVDVVTKILTDGKIIPHREHGKHKEVN</sequence>
<feature type="chain" id="PRO_0000373996" description="SDO1-like protein C21C3.19">
    <location>
        <begin position="1"/>
        <end position="106"/>
    </location>
</feature>
<comment type="function">
    <text evidence="1">May play a role in RNA metabolism.</text>
</comment>
<comment type="subcellular location">
    <subcellularLocation>
        <location evidence="2">Cytoplasm</location>
    </subcellularLocation>
    <subcellularLocation>
        <location evidence="2">Nucleus</location>
    </subcellularLocation>
</comment>
<comment type="similarity">
    <text evidence="3">Belongs to the SDO1-like family.</text>
</comment>
<evidence type="ECO:0000250" key="1"/>
<evidence type="ECO:0000269" key="2">
    <source>
    </source>
</evidence>
<evidence type="ECO:0000305" key="3"/>
<proteinExistence type="inferred from homology"/>
<accession>Q9P7K6</accession>
<dbReference type="EMBL" id="CU329671">
    <property type="protein sequence ID" value="CAB76055.1"/>
    <property type="molecule type" value="Genomic_DNA"/>
</dbReference>
<dbReference type="PIR" id="T50363">
    <property type="entry name" value="T50363"/>
</dbReference>
<dbReference type="SMR" id="Q9P7K6"/>
<dbReference type="BioGRID" id="277136">
    <property type="interactions" value="3"/>
</dbReference>
<dbReference type="FunCoup" id="Q9P7K6">
    <property type="interactions" value="32"/>
</dbReference>
<dbReference type="STRING" id="284812.Q9P7K6"/>
<dbReference type="PaxDb" id="4896-SPBC21C3.19.1"/>
<dbReference type="EnsemblFungi" id="SPBC21C3.19.1">
    <property type="protein sequence ID" value="SPBC21C3.19.1:pep"/>
    <property type="gene ID" value="SPBC21C3.19"/>
</dbReference>
<dbReference type="KEGG" id="spo:2540610"/>
<dbReference type="PomBase" id="SPBC21C3.19"/>
<dbReference type="VEuPathDB" id="FungiDB:SPBC21C3.19"/>
<dbReference type="eggNOG" id="ENOG502S9SB">
    <property type="taxonomic scope" value="Eukaryota"/>
</dbReference>
<dbReference type="HOGENOM" id="CLU_137480_1_0_1"/>
<dbReference type="InParanoid" id="Q9P7K6"/>
<dbReference type="OMA" id="TRICHQG"/>
<dbReference type="PhylomeDB" id="Q9P7K6"/>
<dbReference type="PRO" id="PR:Q9P7K6"/>
<dbReference type="Proteomes" id="UP000002485">
    <property type="component" value="Chromosome II"/>
</dbReference>
<dbReference type="GO" id="GO:0005829">
    <property type="term" value="C:cytosol"/>
    <property type="evidence" value="ECO:0007005"/>
    <property type="project" value="PomBase"/>
</dbReference>
<dbReference type="GO" id="GO:0005634">
    <property type="term" value="C:nucleus"/>
    <property type="evidence" value="ECO:0007005"/>
    <property type="project" value="PomBase"/>
</dbReference>
<dbReference type="GO" id="GO:0042254">
    <property type="term" value="P:ribosome biogenesis"/>
    <property type="evidence" value="ECO:0000250"/>
    <property type="project" value="PomBase"/>
</dbReference>
<dbReference type="Gene3D" id="3.30.1250.10">
    <property type="entry name" value="Ribosome maturation protein SBDS, N-terminal domain"/>
    <property type="match status" value="1"/>
</dbReference>
<dbReference type="InterPro" id="IPR036786">
    <property type="entry name" value="Ribosome_mat_SBDS_N_sf"/>
</dbReference>
<dbReference type="InterPro" id="IPR039100">
    <property type="entry name" value="Sdo1/SBDS-like"/>
</dbReference>
<dbReference type="InterPro" id="IPR019783">
    <property type="entry name" value="SDO1/SBDS_N"/>
</dbReference>
<dbReference type="PANTHER" id="PTHR10927:SF2">
    <property type="entry name" value="RESTRICTION OF TELOMERE CAPPING PROTEIN 3"/>
    <property type="match status" value="1"/>
</dbReference>
<dbReference type="PANTHER" id="PTHR10927">
    <property type="entry name" value="RIBOSOME MATURATION PROTEIN SBDS"/>
    <property type="match status" value="1"/>
</dbReference>
<dbReference type="Pfam" id="PF01172">
    <property type="entry name" value="SBDS_N"/>
    <property type="match status" value="1"/>
</dbReference>
<dbReference type="SUPFAM" id="SSF89895">
    <property type="entry name" value="FYSH domain"/>
    <property type="match status" value="1"/>
</dbReference>
<keyword id="KW-0963">Cytoplasm</keyword>
<keyword id="KW-0539">Nucleus</keyword>
<keyword id="KW-1185">Reference proteome</keyword>
<protein>
    <recommendedName>
        <fullName>SDO1-like protein C21C3.19</fullName>
    </recommendedName>
</protein>
<organism>
    <name type="scientific">Schizosaccharomyces pombe (strain 972 / ATCC 24843)</name>
    <name type="common">Fission yeast</name>
    <dbReference type="NCBI Taxonomy" id="284812"/>
    <lineage>
        <taxon>Eukaryota</taxon>
        <taxon>Fungi</taxon>
        <taxon>Dikarya</taxon>
        <taxon>Ascomycota</taxon>
        <taxon>Taphrinomycotina</taxon>
        <taxon>Schizosaccharomycetes</taxon>
        <taxon>Schizosaccharomycetales</taxon>
        <taxon>Schizosaccharomycetaceae</taxon>
        <taxon>Schizosaccharomyces</taxon>
    </lineage>
</organism>
<gene>
    <name type="ORF">SPBC21C3.19</name>
</gene>
<reference key="1">
    <citation type="journal article" date="2002" name="Nature">
        <title>The genome sequence of Schizosaccharomyces pombe.</title>
        <authorList>
            <person name="Wood V."/>
            <person name="Gwilliam R."/>
            <person name="Rajandream M.A."/>
            <person name="Lyne M.H."/>
            <person name="Lyne R."/>
            <person name="Stewart A."/>
            <person name="Sgouros J.G."/>
            <person name="Peat N."/>
            <person name="Hayles J."/>
            <person name="Baker S.G."/>
            <person name="Basham D."/>
            <person name="Bowman S."/>
            <person name="Brooks K."/>
            <person name="Brown D."/>
            <person name="Brown S."/>
            <person name="Chillingworth T."/>
            <person name="Churcher C.M."/>
            <person name="Collins M."/>
            <person name="Connor R."/>
            <person name="Cronin A."/>
            <person name="Davis P."/>
            <person name="Feltwell T."/>
            <person name="Fraser A."/>
            <person name="Gentles S."/>
            <person name="Goble A."/>
            <person name="Hamlin N."/>
            <person name="Harris D.E."/>
            <person name="Hidalgo J."/>
            <person name="Hodgson G."/>
            <person name="Holroyd S."/>
            <person name="Hornsby T."/>
            <person name="Howarth S."/>
            <person name="Huckle E.J."/>
            <person name="Hunt S."/>
            <person name="Jagels K."/>
            <person name="James K.D."/>
            <person name="Jones L."/>
            <person name="Jones M."/>
            <person name="Leather S."/>
            <person name="McDonald S."/>
            <person name="McLean J."/>
            <person name="Mooney P."/>
            <person name="Moule S."/>
            <person name="Mungall K.L."/>
            <person name="Murphy L.D."/>
            <person name="Niblett D."/>
            <person name="Odell C."/>
            <person name="Oliver K."/>
            <person name="O'Neil S."/>
            <person name="Pearson D."/>
            <person name="Quail M.A."/>
            <person name="Rabbinowitsch E."/>
            <person name="Rutherford K.M."/>
            <person name="Rutter S."/>
            <person name="Saunders D."/>
            <person name="Seeger K."/>
            <person name="Sharp S."/>
            <person name="Skelton J."/>
            <person name="Simmonds M.N."/>
            <person name="Squares R."/>
            <person name="Squares S."/>
            <person name="Stevens K."/>
            <person name="Taylor K."/>
            <person name="Taylor R.G."/>
            <person name="Tivey A."/>
            <person name="Walsh S.V."/>
            <person name="Warren T."/>
            <person name="Whitehead S."/>
            <person name="Woodward J.R."/>
            <person name="Volckaert G."/>
            <person name="Aert R."/>
            <person name="Robben J."/>
            <person name="Grymonprez B."/>
            <person name="Weltjens I."/>
            <person name="Vanstreels E."/>
            <person name="Rieger M."/>
            <person name="Schaefer M."/>
            <person name="Mueller-Auer S."/>
            <person name="Gabel C."/>
            <person name="Fuchs M."/>
            <person name="Duesterhoeft A."/>
            <person name="Fritzc C."/>
            <person name="Holzer E."/>
            <person name="Moestl D."/>
            <person name="Hilbert H."/>
            <person name="Borzym K."/>
            <person name="Langer I."/>
            <person name="Beck A."/>
            <person name="Lehrach H."/>
            <person name="Reinhardt R."/>
            <person name="Pohl T.M."/>
            <person name="Eger P."/>
            <person name="Zimmermann W."/>
            <person name="Wedler H."/>
            <person name="Wambutt R."/>
            <person name="Purnelle B."/>
            <person name="Goffeau A."/>
            <person name="Cadieu E."/>
            <person name="Dreano S."/>
            <person name="Gloux S."/>
            <person name="Lelaure V."/>
            <person name="Mottier S."/>
            <person name="Galibert F."/>
            <person name="Aves S.J."/>
            <person name="Xiang Z."/>
            <person name="Hunt C."/>
            <person name="Moore K."/>
            <person name="Hurst S.M."/>
            <person name="Lucas M."/>
            <person name="Rochet M."/>
            <person name="Gaillardin C."/>
            <person name="Tallada V.A."/>
            <person name="Garzon A."/>
            <person name="Thode G."/>
            <person name="Daga R.R."/>
            <person name="Cruzado L."/>
            <person name="Jimenez J."/>
            <person name="Sanchez M."/>
            <person name="del Rey F."/>
            <person name="Benito J."/>
            <person name="Dominguez A."/>
            <person name="Revuelta J.L."/>
            <person name="Moreno S."/>
            <person name="Armstrong J."/>
            <person name="Forsburg S.L."/>
            <person name="Cerutti L."/>
            <person name="Lowe T."/>
            <person name="McCombie W.R."/>
            <person name="Paulsen I."/>
            <person name="Potashkin J."/>
            <person name="Shpakovski G.V."/>
            <person name="Ussery D."/>
            <person name="Barrell B.G."/>
            <person name="Nurse P."/>
        </authorList>
    </citation>
    <scope>NUCLEOTIDE SEQUENCE [LARGE SCALE GENOMIC DNA]</scope>
    <source>
        <strain>972 / ATCC 24843</strain>
    </source>
</reference>
<reference key="2">
    <citation type="journal article" date="2006" name="Nat. Biotechnol.">
        <title>ORFeome cloning and global analysis of protein localization in the fission yeast Schizosaccharomyces pombe.</title>
        <authorList>
            <person name="Matsuyama A."/>
            <person name="Arai R."/>
            <person name="Yashiroda Y."/>
            <person name="Shirai A."/>
            <person name="Kamata A."/>
            <person name="Sekido S."/>
            <person name="Kobayashi Y."/>
            <person name="Hashimoto A."/>
            <person name="Hamamoto M."/>
            <person name="Hiraoka Y."/>
            <person name="Horinouchi S."/>
            <person name="Yoshida M."/>
        </authorList>
    </citation>
    <scope>SUBCELLULAR LOCATION [LARGE SCALE ANALYSIS]</scope>
</reference>